<gene>
    <name type="primary">SUB11</name>
    <name type="ORF">ARB_06111</name>
</gene>
<reference key="1">
    <citation type="journal article" date="2011" name="Genome Biol.">
        <title>Comparative and functional genomics provide insights into the pathogenicity of dermatophytic fungi.</title>
        <authorList>
            <person name="Burmester A."/>
            <person name="Shelest E."/>
            <person name="Gloeckner G."/>
            <person name="Heddergott C."/>
            <person name="Schindler S."/>
            <person name="Staib P."/>
            <person name="Heidel A."/>
            <person name="Felder M."/>
            <person name="Petzold A."/>
            <person name="Szafranski K."/>
            <person name="Feuermann M."/>
            <person name="Pedruzzi I."/>
            <person name="Priebe S."/>
            <person name="Groth M."/>
            <person name="Winkler R."/>
            <person name="Li W."/>
            <person name="Kniemeyer O."/>
            <person name="Schroeckh V."/>
            <person name="Hertweck C."/>
            <person name="Hube B."/>
            <person name="White T.C."/>
            <person name="Platzer M."/>
            <person name="Guthke R."/>
            <person name="Heitman J."/>
            <person name="Woestemeyer J."/>
            <person name="Zipfel P.F."/>
            <person name="Monod M."/>
            <person name="Brakhage A.A."/>
        </authorList>
    </citation>
    <scope>NUCLEOTIDE SEQUENCE [LARGE SCALE GENOMIC DNA]</scope>
    <source>
        <strain>ATCC MYA-4681 / CBS 112371</strain>
    </source>
</reference>
<dbReference type="EC" id="3.4.21.-"/>
<dbReference type="EMBL" id="ABSU01000004">
    <property type="protein sequence ID" value="EFE35154.1"/>
    <property type="molecule type" value="Genomic_DNA"/>
</dbReference>
<dbReference type="RefSeq" id="XP_003015799.1">
    <property type="nucleotide sequence ID" value="XM_003015753.1"/>
</dbReference>
<dbReference type="SMR" id="D4APE3"/>
<dbReference type="GlyCosmos" id="D4APE3">
    <property type="glycosylation" value="6 sites, No reported glycans"/>
</dbReference>
<dbReference type="GeneID" id="9526081"/>
<dbReference type="KEGG" id="abe:ARB_06111"/>
<dbReference type="eggNOG" id="KOG1153">
    <property type="taxonomic scope" value="Eukaryota"/>
</dbReference>
<dbReference type="HOGENOM" id="CLU_011263_1_3_1"/>
<dbReference type="OMA" id="GWHAYSG"/>
<dbReference type="Proteomes" id="UP000008866">
    <property type="component" value="Unassembled WGS sequence"/>
</dbReference>
<dbReference type="GO" id="GO:0005576">
    <property type="term" value="C:extracellular region"/>
    <property type="evidence" value="ECO:0007669"/>
    <property type="project" value="UniProtKB-SubCell"/>
</dbReference>
<dbReference type="GO" id="GO:0004252">
    <property type="term" value="F:serine-type endopeptidase activity"/>
    <property type="evidence" value="ECO:0007669"/>
    <property type="project" value="InterPro"/>
</dbReference>
<dbReference type="GO" id="GO:0006508">
    <property type="term" value="P:proteolysis"/>
    <property type="evidence" value="ECO:0007669"/>
    <property type="project" value="UniProtKB-KW"/>
</dbReference>
<dbReference type="CDD" id="cd04077">
    <property type="entry name" value="Peptidases_S8_PCSK9_ProteinaseK_like"/>
    <property type="match status" value="1"/>
</dbReference>
<dbReference type="FunFam" id="3.40.50.200:FF:000014">
    <property type="entry name" value="Proteinase K"/>
    <property type="match status" value="1"/>
</dbReference>
<dbReference type="Gene3D" id="3.30.70.80">
    <property type="entry name" value="Peptidase S8 propeptide/proteinase inhibitor I9"/>
    <property type="match status" value="1"/>
</dbReference>
<dbReference type="Gene3D" id="3.40.50.200">
    <property type="entry name" value="Peptidase S8/S53 domain"/>
    <property type="match status" value="1"/>
</dbReference>
<dbReference type="InterPro" id="IPR034193">
    <property type="entry name" value="PCSK9_ProteinaseK-like"/>
</dbReference>
<dbReference type="InterPro" id="IPR000209">
    <property type="entry name" value="Peptidase_S8/S53_dom"/>
</dbReference>
<dbReference type="InterPro" id="IPR036852">
    <property type="entry name" value="Peptidase_S8/S53_dom_sf"/>
</dbReference>
<dbReference type="InterPro" id="IPR050131">
    <property type="entry name" value="Peptidase_S8_subtilisin-like"/>
</dbReference>
<dbReference type="InterPro" id="IPR015500">
    <property type="entry name" value="Peptidase_S8_subtilisin-rel"/>
</dbReference>
<dbReference type="InterPro" id="IPR010259">
    <property type="entry name" value="S8pro/Inhibitor_I9"/>
</dbReference>
<dbReference type="InterPro" id="IPR037045">
    <property type="entry name" value="S8pro/Inhibitor_I9_sf"/>
</dbReference>
<dbReference type="PANTHER" id="PTHR43806:SF11">
    <property type="entry name" value="CEREVISIN-RELATED"/>
    <property type="match status" value="1"/>
</dbReference>
<dbReference type="PANTHER" id="PTHR43806">
    <property type="entry name" value="PEPTIDASE S8"/>
    <property type="match status" value="1"/>
</dbReference>
<dbReference type="Pfam" id="PF05922">
    <property type="entry name" value="Inhibitor_I9"/>
    <property type="match status" value="1"/>
</dbReference>
<dbReference type="Pfam" id="PF00082">
    <property type="entry name" value="Peptidase_S8"/>
    <property type="match status" value="1"/>
</dbReference>
<dbReference type="PRINTS" id="PR00723">
    <property type="entry name" value="SUBTILISIN"/>
</dbReference>
<dbReference type="SUPFAM" id="SSF54897">
    <property type="entry name" value="Protease propeptides/inhibitors"/>
    <property type="match status" value="1"/>
</dbReference>
<dbReference type="SUPFAM" id="SSF52743">
    <property type="entry name" value="Subtilisin-like"/>
    <property type="match status" value="1"/>
</dbReference>
<dbReference type="PROSITE" id="PS51892">
    <property type="entry name" value="SUBTILASE"/>
    <property type="match status" value="1"/>
</dbReference>
<comment type="function">
    <text evidence="1">Secreted subtilisin-like serine protease with keratinolytic activity that contributes to pathogenicity.</text>
</comment>
<comment type="subcellular location">
    <subcellularLocation>
        <location evidence="1">Secreted</location>
    </subcellularLocation>
</comment>
<comment type="similarity">
    <text evidence="4">Belongs to the peptidase S8 family.</text>
</comment>
<protein>
    <recommendedName>
        <fullName>Subtilisin-like protease 11</fullName>
        <ecNumber>3.4.21.-</ecNumber>
    </recommendedName>
</protein>
<sequence>MGLFKVIFTAVAALSAVDAAELLSSAKSKDIIPNSYLVVMKDSVSSAELDSHVSWVTGLHREGIAKRGAENLGGFKHSYKINGWHAYSGSFDSETLASILDNDKVDFVEHDRHVYISGFVTQKDAPSWGLGRVSHRMNGTRDYVYDESAGSGITFYGVDTGIDIHHPDFGGRAVWGINVVNGTKDNDRHGHGTHTAATAAGTKYGLAKKANVVAVKALNDYGAGLWSNIMKALEWCVNDAREKKILGKAVLNLSISGGKVVAANQAITNAAKAGIFVSVAAGNDNQDATNKSPASAENVCCAAATTIRDDKAKFSNYGSVVKLYAPGQGITSATPNNQTGVMSGTSMAAPHIGGVGATLMASKGIAPSAVCAELIKMASGPVLNPGANTTNKLLYNGSGK</sequence>
<feature type="signal peptide" evidence="2">
    <location>
        <begin position="1"/>
        <end position="19"/>
    </location>
</feature>
<feature type="propeptide" id="PRO_0000406398" evidence="1">
    <location>
        <begin position="20"/>
        <end position="117"/>
    </location>
</feature>
<feature type="chain" id="PRO_0000406399" description="Subtilisin-like protease 11">
    <location>
        <begin position="118"/>
        <end position="400"/>
    </location>
</feature>
<feature type="domain" description="Inhibitor I9" evidence="2">
    <location>
        <begin position="35"/>
        <end position="116"/>
    </location>
</feature>
<feature type="domain" description="Peptidase S8" evidence="3">
    <location>
        <begin position="127"/>
        <end position="400"/>
    </location>
</feature>
<feature type="active site" description="Charge relay system" evidence="3">
    <location>
        <position position="159"/>
    </location>
</feature>
<feature type="active site" description="Charge relay system" evidence="3">
    <location>
        <position position="191"/>
    </location>
</feature>
<feature type="active site" description="Charge relay system" evidence="3">
    <location>
        <position position="346"/>
    </location>
</feature>
<feature type="glycosylation site" description="N-linked (GlcNAc...) asparagine" evidence="2">
    <location>
        <position position="138"/>
    </location>
</feature>
<feature type="glycosylation site" description="N-linked (GlcNAc...) asparagine" evidence="2">
    <location>
        <position position="181"/>
    </location>
</feature>
<feature type="glycosylation site" description="N-linked (GlcNAc...) asparagine" evidence="2">
    <location>
        <position position="252"/>
    </location>
</feature>
<feature type="glycosylation site" description="N-linked (GlcNAc...) asparagine" evidence="2">
    <location>
        <position position="337"/>
    </location>
</feature>
<feature type="glycosylation site" description="N-linked (GlcNAc...) asparagine" evidence="2">
    <location>
        <position position="388"/>
    </location>
</feature>
<feature type="glycosylation site" description="N-linked (GlcNAc...) asparagine" evidence="2">
    <location>
        <position position="396"/>
    </location>
</feature>
<evidence type="ECO:0000250" key="1"/>
<evidence type="ECO:0000255" key="2"/>
<evidence type="ECO:0000255" key="3">
    <source>
        <dbReference type="PROSITE-ProRule" id="PRU01240"/>
    </source>
</evidence>
<evidence type="ECO:0000305" key="4"/>
<proteinExistence type="inferred from homology"/>
<keyword id="KW-0325">Glycoprotein</keyword>
<keyword id="KW-0378">Hydrolase</keyword>
<keyword id="KW-0645">Protease</keyword>
<keyword id="KW-1185">Reference proteome</keyword>
<keyword id="KW-0964">Secreted</keyword>
<keyword id="KW-0720">Serine protease</keyword>
<keyword id="KW-0732">Signal</keyword>
<keyword id="KW-0843">Virulence</keyword>
<keyword id="KW-0865">Zymogen</keyword>
<organism>
    <name type="scientific">Arthroderma benhamiae (strain ATCC MYA-4681 / CBS 112371)</name>
    <name type="common">Trichophyton mentagrophytes</name>
    <dbReference type="NCBI Taxonomy" id="663331"/>
    <lineage>
        <taxon>Eukaryota</taxon>
        <taxon>Fungi</taxon>
        <taxon>Dikarya</taxon>
        <taxon>Ascomycota</taxon>
        <taxon>Pezizomycotina</taxon>
        <taxon>Eurotiomycetes</taxon>
        <taxon>Eurotiomycetidae</taxon>
        <taxon>Onygenales</taxon>
        <taxon>Arthrodermataceae</taxon>
        <taxon>Trichophyton</taxon>
    </lineage>
</organism>
<accession>D4APE3</accession>
<name>SUB11_ARTBC</name>